<protein>
    <recommendedName>
        <fullName evidence="1">ATP synthase subunit c</fullName>
    </recommendedName>
    <alternativeName>
        <fullName evidence="1">ATP synthase F(0) sector subunit c</fullName>
    </alternativeName>
    <alternativeName>
        <fullName evidence="1">F-type ATPase subunit c</fullName>
        <shortName evidence="1">F-ATPase subunit c</shortName>
    </alternativeName>
    <alternativeName>
        <fullName evidence="1">Lipid-binding protein</fullName>
    </alternativeName>
</protein>
<accession>B8DYT4</accession>
<organism>
    <name type="scientific">Dictyoglomus turgidum (strain DSM 6724 / Z-1310)</name>
    <dbReference type="NCBI Taxonomy" id="515635"/>
    <lineage>
        <taxon>Bacteria</taxon>
        <taxon>Pseudomonadati</taxon>
        <taxon>Dictyoglomota</taxon>
        <taxon>Dictyoglomia</taxon>
        <taxon>Dictyoglomales</taxon>
        <taxon>Dictyoglomaceae</taxon>
        <taxon>Dictyoglomus</taxon>
    </lineage>
</organism>
<feature type="chain" id="PRO_1000184359" description="ATP synthase subunit c">
    <location>
        <begin position="1"/>
        <end position="85"/>
    </location>
</feature>
<feature type="transmembrane region" description="Helical" evidence="1">
    <location>
        <begin position="1"/>
        <end position="21"/>
    </location>
</feature>
<feature type="transmembrane region" description="Helical" evidence="1">
    <location>
        <begin position="53"/>
        <end position="73"/>
    </location>
</feature>
<feature type="site" description="Reversibly protonated during proton transport" evidence="1">
    <location>
        <position position="61"/>
    </location>
</feature>
<name>ATPL_DICTD</name>
<sequence>MLAWVIIASIITAGFSVALVGMNATKAQGNAAASAFESVARQPEAGDQINRMLLFALAFIETIMIFTLTVALILLFANPLLGKLS</sequence>
<keyword id="KW-0066">ATP synthesis</keyword>
<keyword id="KW-0997">Cell inner membrane</keyword>
<keyword id="KW-1003">Cell membrane</keyword>
<keyword id="KW-0138">CF(0)</keyword>
<keyword id="KW-0375">Hydrogen ion transport</keyword>
<keyword id="KW-0406">Ion transport</keyword>
<keyword id="KW-0446">Lipid-binding</keyword>
<keyword id="KW-0472">Membrane</keyword>
<keyword id="KW-1185">Reference proteome</keyword>
<keyword id="KW-0812">Transmembrane</keyword>
<keyword id="KW-1133">Transmembrane helix</keyword>
<keyword id="KW-0813">Transport</keyword>
<gene>
    <name evidence="1" type="primary">atpE</name>
    <name type="ordered locus">Dtur_0134</name>
</gene>
<reference key="1">
    <citation type="journal article" date="2016" name="Front. Microbiol.">
        <title>The complete genome sequence of hyperthermophile Dictyoglomus turgidum DSM 6724 reveals a specialized carbohydrate fermentor.</title>
        <authorList>
            <person name="Brumm P.J."/>
            <person name="Gowda K."/>
            <person name="Robb F.T."/>
            <person name="Mead D.A."/>
        </authorList>
    </citation>
    <scope>NUCLEOTIDE SEQUENCE [LARGE SCALE GENOMIC DNA]</scope>
    <source>
        <strain>DSM 6724 / Z-1310</strain>
    </source>
</reference>
<evidence type="ECO:0000255" key="1">
    <source>
        <dbReference type="HAMAP-Rule" id="MF_01396"/>
    </source>
</evidence>
<dbReference type="EMBL" id="CP001251">
    <property type="protein sequence ID" value="ACK41466.1"/>
    <property type="molecule type" value="Genomic_DNA"/>
</dbReference>
<dbReference type="RefSeq" id="WP_012582551.1">
    <property type="nucleotide sequence ID" value="NC_011661.1"/>
</dbReference>
<dbReference type="RefSeq" id="YP_002352080.1">
    <property type="nucleotide sequence ID" value="NC_011661.1"/>
</dbReference>
<dbReference type="SMR" id="B8DYT4"/>
<dbReference type="FunCoup" id="B8DYT4">
    <property type="interactions" value="324"/>
</dbReference>
<dbReference type="STRING" id="515635.Dtur_0134"/>
<dbReference type="EnsemblBacteria" id="ACK41466">
    <property type="protein sequence ID" value="ACK41466"/>
    <property type="gene ID" value="Dtur_0134"/>
</dbReference>
<dbReference type="KEGG" id="dtu:Dtur_0134"/>
<dbReference type="PATRIC" id="fig|515635.4.peg.139"/>
<dbReference type="eggNOG" id="COG0636">
    <property type="taxonomic scope" value="Bacteria"/>
</dbReference>
<dbReference type="HOGENOM" id="CLU_148047_2_0_0"/>
<dbReference type="InParanoid" id="B8DYT4"/>
<dbReference type="OrthoDB" id="9808662at2"/>
<dbReference type="Proteomes" id="UP000007719">
    <property type="component" value="Chromosome"/>
</dbReference>
<dbReference type="GO" id="GO:0005886">
    <property type="term" value="C:plasma membrane"/>
    <property type="evidence" value="ECO:0007669"/>
    <property type="project" value="UniProtKB-SubCell"/>
</dbReference>
<dbReference type="GO" id="GO:0045259">
    <property type="term" value="C:proton-transporting ATP synthase complex"/>
    <property type="evidence" value="ECO:0007669"/>
    <property type="project" value="UniProtKB-KW"/>
</dbReference>
<dbReference type="GO" id="GO:0033177">
    <property type="term" value="C:proton-transporting two-sector ATPase complex, proton-transporting domain"/>
    <property type="evidence" value="ECO:0007669"/>
    <property type="project" value="InterPro"/>
</dbReference>
<dbReference type="GO" id="GO:0008289">
    <property type="term" value="F:lipid binding"/>
    <property type="evidence" value="ECO:0007669"/>
    <property type="project" value="UniProtKB-KW"/>
</dbReference>
<dbReference type="GO" id="GO:0046933">
    <property type="term" value="F:proton-transporting ATP synthase activity, rotational mechanism"/>
    <property type="evidence" value="ECO:0007669"/>
    <property type="project" value="UniProtKB-UniRule"/>
</dbReference>
<dbReference type="GO" id="GO:0015986">
    <property type="term" value="P:proton motive force-driven ATP synthesis"/>
    <property type="evidence" value="ECO:0000318"/>
    <property type="project" value="GO_Central"/>
</dbReference>
<dbReference type="CDD" id="cd18121">
    <property type="entry name" value="ATP-synt_Fo_c"/>
    <property type="match status" value="1"/>
</dbReference>
<dbReference type="FunFam" id="1.20.120.610:FF:000014">
    <property type="entry name" value="ATP synthase subunit c"/>
    <property type="match status" value="1"/>
</dbReference>
<dbReference type="Gene3D" id="1.20.120.610">
    <property type="entry name" value="lithium bound rotor ring of v- atpase"/>
    <property type="match status" value="1"/>
</dbReference>
<dbReference type="HAMAP" id="MF_01396">
    <property type="entry name" value="ATP_synth_c_bact"/>
    <property type="match status" value="1"/>
</dbReference>
<dbReference type="InterPro" id="IPR000454">
    <property type="entry name" value="ATP_synth_F0_csu"/>
</dbReference>
<dbReference type="InterPro" id="IPR020537">
    <property type="entry name" value="ATP_synth_F0_csu_DDCD_BS"/>
</dbReference>
<dbReference type="InterPro" id="IPR002379">
    <property type="entry name" value="ATPase_proteolipid_c-like_dom"/>
</dbReference>
<dbReference type="InterPro" id="IPR035921">
    <property type="entry name" value="F/V-ATP_Csub_sf"/>
</dbReference>
<dbReference type="Pfam" id="PF00137">
    <property type="entry name" value="ATP-synt_C"/>
    <property type="match status" value="1"/>
</dbReference>
<dbReference type="PRINTS" id="PR00124">
    <property type="entry name" value="ATPASEC"/>
</dbReference>
<dbReference type="SUPFAM" id="SSF81333">
    <property type="entry name" value="F1F0 ATP synthase subunit C"/>
    <property type="match status" value="1"/>
</dbReference>
<dbReference type="PROSITE" id="PS00605">
    <property type="entry name" value="ATPASE_C"/>
    <property type="match status" value="1"/>
</dbReference>
<comment type="function">
    <text evidence="1">F(1)F(0) ATP synthase produces ATP from ADP in the presence of a proton or sodium gradient. F-type ATPases consist of two structural domains, F(1) containing the extramembraneous catalytic core and F(0) containing the membrane proton channel, linked together by a central stalk and a peripheral stalk. During catalysis, ATP synthesis in the catalytic domain of F(1) is coupled via a rotary mechanism of the central stalk subunits to proton translocation.</text>
</comment>
<comment type="function">
    <text evidence="1">Key component of the F(0) channel; it plays a direct role in translocation across the membrane. A homomeric c-ring of between 10-14 subunits forms the central stalk rotor element with the F(1) delta and epsilon subunits.</text>
</comment>
<comment type="subunit">
    <text evidence="1">F-type ATPases have 2 components, F(1) - the catalytic core - and F(0) - the membrane proton channel. F(1) has five subunits: alpha(3), beta(3), gamma(1), delta(1), epsilon(1). F(0) has three main subunits: a(1), b(2) and c(10-14). The alpha and beta chains form an alternating ring which encloses part of the gamma chain. F(1) is attached to F(0) by a central stalk formed by the gamma and epsilon chains, while a peripheral stalk is formed by the delta and b chains.</text>
</comment>
<comment type="subcellular location">
    <subcellularLocation>
        <location evidence="1">Cell inner membrane</location>
        <topology evidence="1">Multi-pass membrane protein</topology>
    </subcellularLocation>
</comment>
<comment type="similarity">
    <text evidence="1">Belongs to the ATPase C chain family.</text>
</comment>
<proteinExistence type="inferred from homology"/>